<proteinExistence type="evidence at protein level"/>
<protein>
    <recommendedName>
        <fullName>Protamine-2</fullName>
        <shortName>P2</shortName>
    </recommendedName>
</protein>
<feature type="initiator methionine" description="Removed" evidence="2">
    <location>
        <position position="1"/>
    </location>
</feature>
<feature type="peptide" id="PRO_0000044855" description="Protamine-2">
    <location>
        <begin position="2"/>
        <end position="40"/>
    </location>
</feature>
<feature type="region of interest" description="Disordered" evidence="1">
    <location>
        <begin position="1"/>
        <end position="40"/>
    </location>
</feature>
<evidence type="ECO:0000256" key="1">
    <source>
        <dbReference type="SAM" id="MobiDB-lite"/>
    </source>
</evidence>
<evidence type="ECO:0000269" key="2">
    <source>
    </source>
</evidence>
<dbReference type="EMBL" id="X56530">
    <property type="protein sequence ID" value="CAA39877.1"/>
    <property type="molecule type" value="mRNA"/>
</dbReference>
<dbReference type="PIR" id="S14717">
    <property type="entry name" value="S14717"/>
</dbReference>
<dbReference type="GO" id="GO:0000786">
    <property type="term" value="C:nucleosome"/>
    <property type="evidence" value="ECO:0007669"/>
    <property type="project" value="UniProtKB-KW"/>
</dbReference>
<dbReference type="GO" id="GO:0005634">
    <property type="term" value="C:nucleus"/>
    <property type="evidence" value="ECO:0007669"/>
    <property type="project" value="UniProtKB-SubCell"/>
</dbReference>
<dbReference type="GO" id="GO:0003677">
    <property type="term" value="F:DNA binding"/>
    <property type="evidence" value="ECO:0007669"/>
    <property type="project" value="UniProtKB-KW"/>
</dbReference>
<dbReference type="GO" id="GO:0030154">
    <property type="term" value="P:cell differentiation"/>
    <property type="evidence" value="ECO:0007669"/>
    <property type="project" value="UniProtKB-KW"/>
</dbReference>
<dbReference type="GO" id="GO:0030261">
    <property type="term" value="P:chromosome condensation"/>
    <property type="evidence" value="ECO:0007669"/>
    <property type="project" value="UniProtKB-KW"/>
</dbReference>
<dbReference type="GO" id="GO:0007283">
    <property type="term" value="P:spermatogenesis"/>
    <property type="evidence" value="ECO:0007669"/>
    <property type="project" value="UniProtKB-KW"/>
</dbReference>
<gene>
    <name type="primary">PBP2</name>
</gene>
<keyword id="KW-0158">Chromosome</keyword>
<keyword id="KW-0217">Developmental protein</keyword>
<keyword id="KW-0221">Differentiation</keyword>
<keyword id="KW-0903">Direct protein sequencing</keyword>
<keyword id="KW-0226">DNA condensation</keyword>
<keyword id="KW-0238">DNA-binding</keyword>
<keyword id="KW-0544">Nucleosome core</keyword>
<keyword id="KW-0539">Nucleus</keyword>
<keyword id="KW-0744">Spermatogenesis</keyword>
<comment type="function">
    <text>Protamines substitute for histones in the chromatin of sperm during the haploid phase of spermatogenesis. They compact sperm DNA into a highly condensed, stable and inactive complex.</text>
</comment>
<comment type="subcellular location">
    <subcellularLocation>
        <location>Nucleus</location>
    </subcellularLocation>
    <subcellularLocation>
        <location>Chromosome</location>
    </subcellularLocation>
</comment>
<comment type="tissue specificity">
    <text>Testis.</text>
</comment>
<sequence>MPPRRKRVSSAPRRRRRTYRRTTAHKHQERPVHRRRRRRH</sequence>
<reference key="1">
    <citation type="journal article" date="1991" name="Eur. J. Biochem.">
        <title>Primary structure of toad sperm protamines and nucleotide sequence of their cDNAs.</title>
        <authorList>
            <person name="Takamune K."/>
            <person name="Nishida H."/>
            <person name="Takai M."/>
            <person name="Katagiri C."/>
        </authorList>
    </citation>
    <scope>NUCLEOTIDE SEQUENCE [MRNA]</scope>
    <scope>PROTEIN SEQUENCE OF 2-40</scope>
    <source>
        <tissue>Testis</tissue>
    </source>
</reference>
<name>PRT2_BUFJA</name>
<accession>P24642</accession>
<organism>
    <name type="scientific">Bufo japonicus</name>
    <name type="common">Japanese common toad</name>
    <name type="synonym">Bufo praetextatus</name>
    <dbReference type="NCBI Taxonomy" id="8387"/>
    <lineage>
        <taxon>Eukaryota</taxon>
        <taxon>Metazoa</taxon>
        <taxon>Chordata</taxon>
        <taxon>Craniata</taxon>
        <taxon>Vertebrata</taxon>
        <taxon>Euteleostomi</taxon>
        <taxon>Amphibia</taxon>
        <taxon>Batrachia</taxon>
        <taxon>Anura</taxon>
        <taxon>Neobatrachia</taxon>
        <taxon>Hyloidea</taxon>
        <taxon>Bufonidae</taxon>
        <taxon>Bufo</taxon>
    </lineage>
</organism>